<name>CT110_LACTA</name>
<keyword id="KW-0044">Antibiotic</keyword>
<keyword id="KW-0929">Antimicrobial</keyword>
<keyword id="KW-0204">Cytolysis</keyword>
<keyword id="KW-0354">Hemolysis</keyword>
<keyword id="KW-0964">Secreted</keyword>
<keyword id="KW-0732">Signal</keyword>
<keyword id="KW-0800">Toxin</keyword>
<gene>
    <name type="primary">cit 1-10</name>
</gene>
<protein>
    <recommendedName>
        <fullName>M-zodatoxin-Lt8k</fullName>
        <shortName>M-ZDTX-Lt8k</shortName>
    </recommendedName>
    <alternativeName>
        <fullName>Cytoinsectotoxin 1-10</fullName>
    </alternativeName>
</protein>
<dbReference type="SMR" id="P0CAZ4"/>
<dbReference type="ArachnoServer" id="AS000765">
    <property type="toxin name" value="M-zodatoxin-Lt8k"/>
</dbReference>
<dbReference type="GO" id="GO:0005576">
    <property type="term" value="C:extracellular region"/>
    <property type="evidence" value="ECO:0007669"/>
    <property type="project" value="UniProtKB-SubCell"/>
</dbReference>
<dbReference type="GO" id="GO:0090729">
    <property type="term" value="F:toxin activity"/>
    <property type="evidence" value="ECO:0007669"/>
    <property type="project" value="UniProtKB-KW"/>
</dbReference>
<dbReference type="GO" id="GO:0042742">
    <property type="term" value="P:defense response to bacterium"/>
    <property type="evidence" value="ECO:0007669"/>
    <property type="project" value="UniProtKB-KW"/>
</dbReference>
<dbReference type="GO" id="GO:0031640">
    <property type="term" value="P:killing of cells of another organism"/>
    <property type="evidence" value="ECO:0007669"/>
    <property type="project" value="UniProtKB-KW"/>
</dbReference>
<dbReference type="InterPro" id="IPR018802">
    <property type="entry name" value="Latarcin_precursor"/>
</dbReference>
<dbReference type="Pfam" id="PF10279">
    <property type="entry name" value="Latarcin"/>
    <property type="match status" value="1"/>
</dbReference>
<comment type="function">
    <text evidence="1">Insecticidal, cytolytic and antimicrobial peptide. Forms voltage-dependent, ion-permeable channels in membranes. At high concentration causes cell membrane lysis (By similarity).</text>
</comment>
<comment type="subcellular location">
    <subcellularLocation>
        <location evidence="1">Secreted</location>
    </subcellularLocation>
</comment>
<comment type="tissue specificity">
    <text>Expressed by the venom gland.</text>
</comment>
<comment type="similarity">
    <text evidence="3">Belongs to the cationic peptide 06 (cytoinsectotoxin) family.</text>
</comment>
<evidence type="ECO:0000250" key="1"/>
<evidence type="ECO:0000255" key="2"/>
<evidence type="ECO:0000305" key="3"/>
<reference key="1">
    <citation type="journal article" date="2008" name="Biochem. J.">
        <title>Cyto-insectotoxins, a novel class of cytolytic and insecticidal peptides from spider venom.</title>
        <authorList>
            <person name="Vassilevski A.A."/>
            <person name="Kozlov S.A."/>
            <person name="Samsonova O.V."/>
            <person name="Egorova N.S."/>
            <person name="Karpunin D.V."/>
            <person name="Pluzhnikov K.A."/>
            <person name="Feofanov A.V."/>
            <person name="Grishin E.V."/>
        </authorList>
    </citation>
    <scope>NUCLEOTIDE SEQUENCE [MRNA]</scope>
    <source>
        <tissue>Venom gland</tissue>
    </source>
</reference>
<organism>
    <name type="scientific">Lachesana tarabaevi</name>
    <name type="common">Spider</name>
    <dbReference type="NCBI Taxonomy" id="379576"/>
    <lineage>
        <taxon>Eukaryota</taxon>
        <taxon>Metazoa</taxon>
        <taxon>Ecdysozoa</taxon>
        <taxon>Arthropoda</taxon>
        <taxon>Chelicerata</taxon>
        <taxon>Arachnida</taxon>
        <taxon>Araneae</taxon>
        <taxon>Araneomorphae</taxon>
        <taxon>Entelegynae</taxon>
        <taxon>Entelegynae incertae sedis</taxon>
        <taxon>Zodariidae</taxon>
        <taxon>Lachesana</taxon>
    </lineage>
</organism>
<accession>P0CAZ4</accession>
<sequence>MKYFVVALALVAAFACIAESKPAESEHELAEVEEENELADLEDAVWLEHLADLSDLEEARGFFGNTWKKIKGKADKIMLKKAVKIMVKKEGISKEEAQAKVDAMSKKQIRLYVLKHYGKKALQKVSEKL</sequence>
<proteinExistence type="evidence at transcript level"/>
<feature type="signal peptide" evidence="2">
    <location>
        <begin position="1"/>
        <end position="20"/>
    </location>
</feature>
<feature type="propeptide" id="PRO_0000380141" evidence="1">
    <location>
        <begin position="21"/>
        <end position="60"/>
    </location>
</feature>
<feature type="chain" id="PRO_0000380142" description="M-zodatoxin-Lt8k">
    <location>
        <begin position="61"/>
        <end position="129"/>
    </location>
</feature>